<sequence>MSIIIRVEDLRAVYLVREGTIKAADGISLDILENSVTAIVGESASGKSTIIEAMTKTLPPNGRILSGRVLYKGKDLLTMREEELRKIRWKEIALVPQAAQQSLNPTMKVIEHFKDTVEAHGVRWSHSELIEKASEKLRMVRLNPEAVLNSYPLQLSGGMKQRVLIALALLLDPVVLILDEPTSALDVLTQAHIIQLLKELKKMLKITLIFVTHDIAVAAELADKVAVIYGGNLVEYNSTFQIFKNPLHPYTRGLINSIMAVNADMSKVKPIPGDPPSLLNPPSGCRFHPRCEYAMEICKKEKPKWIRLDGEAHVACHLYEEGRPLK</sequence>
<feature type="chain" id="PRO_0000452197" description="Dipeptide transport ATP-binding protein DppD">
    <location>
        <begin position="1"/>
        <end position="326"/>
    </location>
</feature>
<feature type="domain" description="ABC transporter" evidence="2">
    <location>
        <begin position="5"/>
        <end position="255"/>
    </location>
</feature>
<feature type="binding site" evidence="3 7">
    <location>
        <begin position="44"/>
        <end position="49"/>
    </location>
    <ligand>
        <name>ATP</name>
        <dbReference type="ChEBI" id="CHEBI:30616"/>
    </ligand>
</feature>
<feature type="binding site" evidence="3 7">
    <location>
        <position position="61"/>
    </location>
    <ligand>
        <name>ATP</name>
        <dbReference type="ChEBI" id="CHEBI:30616"/>
    </ligand>
</feature>
<feature type="binding site" evidence="3 7">
    <location>
        <position position="97"/>
    </location>
    <ligand>
        <name>ATP</name>
        <dbReference type="ChEBI" id="CHEBI:30616"/>
    </ligand>
</feature>
<feature type="binding site" evidence="3 7">
    <location>
        <position position="285"/>
    </location>
    <ligand>
        <name>[4Fe-4S] cluster</name>
        <dbReference type="ChEBI" id="CHEBI:49883"/>
    </ligand>
</feature>
<feature type="binding site" evidence="3 7">
    <location>
        <position position="291"/>
    </location>
    <ligand>
        <name>[4Fe-4S] cluster</name>
        <dbReference type="ChEBI" id="CHEBI:49883"/>
    </ligand>
</feature>
<feature type="binding site" evidence="3 7">
    <location>
        <position position="298"/>
    </location>
    <ligand>
        <name>[4Fe-4S] cluster</name>
        <dbReference type="ChEBI" id="CHEBI:49883"/>
    </ligand>
</feature>
<feature type="binding site" evidence="3 7">
    <location>
        <position position="316"/>
    </location>
    <ligand>
        <name>[4Fe-4S] cluster</name>
        <dbReference type="ChEBI" id="CHEBI:49883"/>
    </ligand>
</feature>
<feature type="strand" evidence="8">
    <location>
        <begin position="3"/>
        <end position="16"/>
    </location>
</feature>
<feature type="strand" evidence="8">
    <location>
        <begin position="19"/>
        <end position="21"/>
    </location>
</feature>
<feature type="strand" evidence="8">
    <location>
        <begin position="23"/>
        <end position="26"/>
    </location>
</feature>
<feature type="strand" evidence="8">
    <location>
        <begin position="29"/>
        <end position="32"/>
    </location>
</feature>
<feature type="strand" evidence="8">
    <location>
        <begin position="36"/>
        <end position="40"/>
    </location>
</feature>
<feature type="helix" evidence="8">
    <location>
        <begin position="47"/>
        <end position="54"/>
    </location>
</feature>
<feature type="strand" evidence="8">
    <location>
        <begin position="60"/>
        <end position="71"/>
    </location>
</feature>
<feature type="strand" evidence="8">
    <location>
        <begin position="74"/>
        <end position="76"/>
    </location>
</feature>
<feature type="helix" evidence="8">
    <location>
        <begin position="81"/>
        <end position="84"/>
    </location>
</feature>
<feature type="turn" evidence="8">
    <location>
        <begin position="85"/>
        <end position="87"/>
    </location>
</feature>
<feature type="helix" evidence="8">
    <location>
        <begin position="88"/>
        <end position="91"/>
    </location>
</feature>
<feature type="strand" evidence="8">
    <location>
        <begin position="92"/>
        <end position="95"/>
    </location>
</feature>
<feature type="helix" evidence="8">
    <location>
        <begin position="99"/>
        <end position="102"/>
    </location>
</feature>
<feature type="helix" evidence="8">
    <location>
        <begin position="109"/>
        <end position="119"/>
    </location>
</feature>
<feature type="helix" evidence="8">
    <location>
        <begin position="126"/>
        <end position="139"/>
    </location>
</feature>
<feature type="helix" evidence="8">
    <location>
        <begin position="144"/>
        <end position="148"/>
    </location>
</feature>
<feature type="helix" evidence="8">
    <location>
        <begin position="152"/>
        <end position="154"/>
    </location>
</feature>
<feature type="helix" evidence="8">
    <location>
        <begin position="157"/>
        <end position="169"/>
    </location>
</feature>
<feature type="strand" evidence="8">
    <location>
        <begin position="174"/>
        <end position="180"/>
    </location>
</feature>
<feature type="strand" evidence="8">
    <location>
        <begin position="183"/>
        <end position="185"/>
    </location>
</feature>
<feature type="helix" evidence="8">
    <location>
        <begin position="187"/>
        <end position="203"/>
    </location>
</feature>
<feature type="strand" evidence="8">
    <location>
        <begin position="207"/>
        <end position="213"/>
    </location>
</feature>
<feature type="helix" evidence="8">
    <location>
        <begin position="215"/>
        <end position="221"/>
    </location>
</feature>
<feature type="strand" evidence="8">
    <location>
        <begin position="223"/>
        <end position="229"/>
    </location>
</feature>
<feature type="strand" evidence="8">
    <location>
        <begin position="232"/>
        <end position="238"/>
    </location>
</feature>
<feature type="helix" evidence="8">
    <location>
        <begin position="239"/>
        <end position="244"/>
    </location>
</feature>
<feature type="helix" evidence="8">
    <location>
        <begin position="249"/>
        <end position="256"/>
    </location>
</feature>
<feature type="strand" evidence="8">
    <location>
        <begin position="278"/>
        <end position="280"/>
    </location>
</feature>
<feature type="strand" evidence="8">
    <location>
        <begin position="283"/>
        <end position="285"/>
    </location>
</feature>
<feature type="turn" evidence="8">
    <location>
        <begin position="286"/>
        <end position="290"/>
    </location>
</feature>
<feature type="helix" evidence="8">
    <location>
        <begin position="296"/>
        <end position="300"/>
    </location>
</feature>
<feature type="strand" evidence="8">
    <location>
        <begin position="313"/>
        <end position="315"/>
    </location>
</feature>
<dbReference type="EC" id="7.4.2.9" evidence="1"/>
<dbReference type="EMBL" id="AE008691">
    <property type="protein sequence ID" value="AAM23365.1"/>
    <property type="molecule type" value="Genomic_DNA"/>
</dbReference>
<dbReference type="RefSeq" id="WP_009610546.1">
    <property type="nucleotide sequence ID" value="NZ_JANUCV010000001.1"/>
</dbReference>
<dbReference type="PDB" id="4FWI">
    <property type="method" value="X-ray"/>
    <property type="resolution" value="2.89 A"/>
    <property type="chains" value="B=1-326"/>
</dbReference>
<dbReference type="PDBsum" id="4FWI"/>
<dbReference type="SMR" id="Q8RDH4"/>
<dbReference type="STRING" id="273068.TTE0057"/>
<dbReference type="KEGG" id="tte:TTE0057"/>
<dbReference type="eggNOG" id="COG0444">
    <property type="taxonomic scope" value="Bacteria"/>
</dbReference>
<dbReference type="HOGENOM" id="CLU_000604_1_23_9"/>
<dbReference type="OrthoDB" id="41661at2"/>
<dbReference type="EvolutionaryTrace" id="Q8RDH4"/>
<dbReference type="Proteomes" id="UP000000555">
    <property type="component" value="Chromosome"/>
</dbReference>
<dbReference type="GO" id="GO:0005886">
    <property type="term" value="C:plasma membrane"/>
    <property type="evidence" value="ECO:0007669"/>
    <property type="project" value="UniProtKB-SubCell"/>
</dbReference>
<dbReference type="GO" id="GO:0051539">
    <property type="term" value="F:4 iron, 4 sulfur cluster binding"/>
    <property type="evidence" value="ECO:0007669"/>
    <property type="project" value="UniProtKB-KW"/>
</dbReference>
<dbReference type="GO" id="GO:0005524">
    <property type="term" value="F:ATP binding"/>
    <property type="evidence" value="ECO:0007669"/>
    <property type="project" value="UniProtKB-KW"/>
</dbReference>
<dbReference type="GO" id="GO:0016887">
    <property type="term" value="F:ATP hydrolysis activity"/>
    <property type="evidence" value="ECO:0007669"/>
    <property type="project" value="InterPro"/>
</dbReference>
<dbReference type="GO" id="GO:0046872">
    <property type="term" value="F:metal ion binding"/>
    <property type="evidence" value="ECO:0007669"/>
    <property type="project" value="UniProtKB-KW"/>
</dbReference>
<dbReference type="GO" id="GO:0015833">
    <property type="term" value="P:peptide transport"/>
    <property type="evidence" value="ECO:0007669"/>
    <property type="project" value="UniProtKB-KW"/>
</dbReference>
<dbReference type="GO" id="GO:0015031">
    <property type="term" value="P:protein transport"/>
    <property type="evidence" value="ECO:0007669"/>
    <property type="project" value="UniProtKB-KW"/>
</dbReference>
<dbReference type="CDD" id="cd03257">
    <property type="entry name" value="ABC_NikE_OppD_transporters"/>
    <property type="match status" value="1"/>
</dbReference>
<dbReference type="FunFam" id="3.40.50.300:FF:000016">
    <property type="entry name" value="Oligopeptide ABC transporter ATP-binding component"/>
    <property type="match status" value="1"/>
</dbReference>
<dbReference type="Gene3D" id="3.40.50.300">
    <property type="entry name" value="P-loop containing nucleotide triphosphate hydrolases"/>
    <property type="match status" value="1"/>
</dbReference>
<dbReference type="InterPro" id="IPR003593">
    <property type="entry name" value="AAA+_ATPase"/>
</dbReference>
<dbReference type="InterPro" id="IPR003439">
    <property type="entry name" value="ABC_transporter-like_ATP-bd"/>
</dbReference>
<dbReference type="InterPro" id="IPR017871">
    <property type="entry name" value="ABC_transporter-like_CS"/>
</dbReference>
<dbReference type="InterPro" id="IPR013563">
    <property type="entry name" value="Oligopep_ABC_C"/>
</dbReference>
<dbReference type="InterPro" id="IPR027417">
    <property type="entry name" value="P-loop_NTPase"/>
</dbReference>
<dbReference type="NCBIfam" id="TIGR01727">
    <property type="entry name" value="oligo_HPY"/>
    <property type="match status" value="1"/>
</dbReference>
<dbReference type="PANTHER" id="PTHR43067:SF3">
    <property type="entry name" value="MALTOSE ABC TRANSPORTER, ATP-BINDING PROTEIN"/>
    <property type="match status" value="1"/>
</dbReference>
<dbReference type="PANTHER" id="PTHR43067">
    <property type="entry name" value="OLIGOPEPTIDE/DIPEPTIDE ABC TRANSPORTER, ATPASE SUBUNIT"/>
    <property type="match status" value="1"/>
</dbReference>
<dbReference type="Pfam" id="PF00005">
    <property type="entry name" value="ABC_tran"/>
    <property type="match status" value="1"/>
</dbReference>
<dbReference type="Pfam" id="PF08352">
    <property type="entry name" value="oligo_HPY"/>
    <property type="match status" value="1"/>
</dbReference>
<dbReference type="SMART" id="SM00382">
    <property type="entry name" value="AAA"/>
    <property type="match status" value="1"/>
</dbReference>
<dbReference type="SUPFAM" id="SSF52540">
    <property type="entry name" value="P-loop containing nucleoside triphosphate hydrolases"/>
    <property type="match status" value="1"/>
</dbReference>
<dbReference type="PROSITE" id="PS00211">
    <property type="entry name" value="ABC_TRANSPORTER_1"/>
    <property type="match status" value="1"/>
</dbReference>
<dbReference type="PROSITE" id="PS50893">
    <property type="entry name" value="ABC_TRANSPORTER_2"/>
    <property type="match status" value="1"/>
</dbReference>
<keyword id="KW-0002">3D-structure</keyword>
<keyword id="KW-0004">4Fe-4S</keyword>
<keyword id="KW-0067">ATP-binding</keyword>
<keyword id="KW-1003">Cell membrane</keyword>
<keyword id="KW-0408">Iron</keyword>
<keyword id="KW-0411">Iron-sulfur</keyword>
<keyword id="KW-0472">Membrane</keyword>
<keyword id="KW-0479">Metal-binding</keyword>
<keyword id="KW-0547">Nucleotide-binding</keyword>
<keyword id="KW-0571">Peptide transport</keyword>
<keyword id="KW-0653">Protein transport</keyword>
<keyword id="KW-1185">Reference proteome</keyword>
<keyword id="KW-1278">Translocase</keyword>
<keyword id="KW-0813">Transport</keyword>
<gene>
    <name evidence="4" type="primary">dppD</name>
    <name evidence="6" type="ordered locus">TTE0057</name>
</gene>
<accession>Q8RDH4</accession>
<comment type="function">
    <text evidence="1">Part of the ABC transporter Dpp involved in dipeptide transport. Responsible for energy coupling to the transport system.</text>
</comment>
<comment type="catalytic activity">
    <reaction evidence="1">
        <text>a dipeptide(out) + ATP + H2O = a dipeptide(in) + ADP + phosphate + H(+)</text>
        <dbReference type="Rhea" id="RHEA:23120"/>
        <dbReference type="ChEBI" id="CHEBI:15377"/>
        <dbReference type="ChEBI" id="CHEBI:15378"/>
        <dbReference type="ChEBI" id="CHEBI:30616"/>
        <dbReference type="ChEBI" id="CHEBI:43474"/>
        <dbReference type="ChEBI" id="CHEBI:90799"/>
        <dbReference type="ChEBI" id="CHEBI:456216"/>
        <dbReference type="EC" id="7.4.2.9"/>
    </reaction>
</comment>
<comment type="activity regulation">
    <text evidence="3">The C-terminal iron-sulfur cluster may stabilize the structure of the C-terminal loops and may function in the regulation of the transport process.</text>
</comment>
<comment type="subcellular location">
    <subcellularLocation>
        <location evidence="5">Cell membrane</location>
        <topology evidence="5">Peripheral membrane protein</topology>
    </subcellularLocation>
</comment>
<comment type="domain">
    <text evidence="3">Contains an N-terminal conserved nucleotide-binding domain and a C-terminal domain bound with a [4Fe-4S] cluster. The C-terminal domain forms a stable loop region and interacts with the N-terminal domain.</text>
</comment>
<comment type="similarity">
    <text evidence="5">Belongs to the ABC transporter superfamily.</text>
</comment>
<organism>
    <name type="scientific">Caldanaerobacter subterraneus subsp. tengcongensis (strain DSM 15242 / JCM 11007 / NBRC 100824 / MB4)</name>
    <name type="common">Thermoanaerobacter tengcongensis</name>
    <dbReference type="NCBI Taxonomy" id="273068"/>
    <lineage>
        <taxon>Bacteria</taxon>
        <taxon>Bacillati</taxon>
        <taxon>Bacillota</taxon>
        <taxon>Clostridia</taxon>
        <taxon>Thermoanaerobacterales</taxon>
        <taxon>Thermoanaerobacteraceae</taxon>
        <taxon>Caldanaerobacter</taxon>
    </lineage>
</organism>
<protein>
    <recommendedName>
        <fullName evidence="1">Dipeptide transport ATP-binding protein DppD</fullName>
        <ecNumber evidence="1">7.4.2.9</ecNumber>
    </recommendedName>
</protein>
<reference key="1">
    <citation type="journal article" date="2002" name="Genome Res.">
        <title>A complete sequence of the T. tengcongensis genome.</title>
        <authorList>
            <person name="Bao Q."/>
            <person name="Tian Y."/>
            <person name="Li W."/>
            <person name="Xu Z."/>
            <person name="Xuan Z."/>
            <person name="Hu S."/>
            <person name="Dong W."/>
            <person name="Yang J."/>
            <person name="Chen Y."/>
            <person name="Xue Y."/>
            <person name="Xu Y."/>
            <person name="Lai X."/>
            <person name="Huang L."/>
            <person name="Dong X."/>
            <person name="Ma Y."/>
            <person name="Ling L."/>
            <person name="Tan H."/>
            <person name="Chen R."/>
            <person name="Wang J."/>
            <person name="Yu J."/>
            <person name="Yang H."/>
        </authorList>
    </citation>
    <scope>NUCLEOTIDE SEQUENCE [LARGE SCALE GENOMIC DNA]</scope>
    <source>
        <strain>DSM 15242 / JCM 11007 / NBRC 100824 / MB4</strain>
    </source>
</reference>
<reference evidence="7" key="2">
    <citation type="journal article" date="2013" name="Acta Crystallogr. D">
        <title>Structure of the nucleotide-binding domain of a dipeptide ABC transporter reveals a novel iron-sulfur cluster-binding domain.</title>
        <authorList>
            <person name="Li X."/>
            <person name="Zhuo W."/>
            <person name="Yu J."/>
            <person name="Ge J."/>
            <person name="Gu J."/>
            <person name="Feng Y."/>
            <person name="Yang M."/>
            <person name="Wang L."/>
            <person name="Wang N."/>
        </authorList>
    </citation>
    <scope>X-RAY CRYSTALLOGRAPHY (2.89 ANGSTROMS) IN COMPLEX WITH ATP; MAGNESIUM AND IRON-SULFUR (4FE-4S)</scope>
    <scope>ACTIVITY REGULATION</scope>
    <scope>DOMAIN</scope>
</reference>
<evidence type="ECO:0000250" key="1">
    <source>
        <dbReference type="UniProtKB" id="A2RI77"/>
    </source>
</evidence>
<evidence type="ECO:0000255" key="2">
    <source>
        <dbReference type="PROSITE-ProRule" id="PRU00434"/>
    </source>
</evidence>
<evidence type="ECO:0000269" key="3">
    <source>
    </source>
</evidence>
<evidence type="ECO:0000303" key="4">
    <source>
    </source>
</evidence>
<evidence type="ECO:0000305" key="5"/>
<evidence type="ECO:0000312" key="6">
    <source>
        <dbReference type="EMBL" id="AAM23365.1"/>
    </source>
</evidence>
<evidence type="ECO:0007744" key="7">
    <source>
        <dbReference type="PDB" id="4FWI"/>
    </source>
</evidence>
<evidence type="ECO:0007829" key="8">
    <source>
        <dbReference type="PDB" id="4FWI"/>
    </source>
</evidence>
<name>DPPD_CALS4</name>
<proteinExistence type="evidence at protein level"/>